<protein>
    <recommendedName>
        <fullName evidence="1">Ribosome maturation factor RimP</fullName>
    </recommendedName>
</protein>
<keyword id="KW-0963">Cytoplasm</keyword>
<keyword id="KW-0690">Ribosome biogenesis</keyword>
<proteinExistence type="inferred from homology"/>
<gene>
    <name evidence="1" type="primary">rimP</name>
    <name type="ordered locus">BPP1860</name>
</gene>
<sequence length="168" mass="18712">MADLFALTEEALAGMDIELVDVERAAMGLLRVTIDRVDGVRIEDCEQVSRQLSHVYEVENIDYKRLEVGSPGVDRPLRNEAEFRRFAGERIEIKLREALDGRKVFSGTLRAPEADGASGQDDTAGAGKAVFGLEFEAKKNDIQVLSFTLDDIERAKLDPVLDFKGKKR</sequence>
<dbReference type="EMBL" id="BX640428">
    <property type="protein sequence ID" value="CAE37161.1"/>
    <property type="molecule type" value="Genomic_DNA"/>
</dbReference>
<dbReference type="RefSeq" id="WP_010928243.1">
    <property type="nucleotide sequence ID" value="NC_002928.3"/>
</dbReference>
<dbReference type="SMR" id="Q7W9A7"/>
<dbReference type="GeneID" id="93203629"/>
<dbReference type="KEGG" id="bpa:BPP1860"/>
<dbReference type="HOGENOM" id="CLU_070525_1_0_4"/>
<dbReference type="Proteomes" id="UP000001421">
    <property type="component" value="Chromosome"/>
</dbReference>
<dbReference type="GO" id="GO:0005829">
    <property type="term" value="C:cytosol"/>
    <property type="evidence" value="ECO:0007669"/>
    <property type="project" value="TreeGrafter"/>
</dbReference>
<dbReference type="GO" id="GO:0000028">
    <property type="term" value="P:ribosomal small subunit assembly"/>
    <property type="evidence" value="ECO:0007669"/>
    <property type="project" value="TreeGrafter"/>
</dbReference>
<dbReference type="GO" id="GO:0006412">
    <property type="term" value="P:translation"/>
    <property type="evidence" value="ECO:0007669"/>
    <property type="project" value="TreeGrafter"/>
</dbReference>
<dbReference type="CDD" id="cd01734">
    <property type="entry name" value="YlxS_C"/>
    <property type="match status" value="1"/>
</dbReference>
<dbReference type="Gene3D" id="2.30.30.180">
    <property type="entry name" value="Ribosome maturation factor RimP, C-terminal domain"/>
    <property type="match status" value="1"/>
</dbReference>
<dbReference type="Gene3D" id="3.30.300.70">
    <property type="entry name" value="RimP-like superfamily, N-terminal"/>
    <property type="match status" value="1"/>
</dbReference>
<dbReference type="HAMAP" id="MF_01077">
    <property type="entry name" value="RimP"/>
    <property type="match status" value="1"/>
</dbReference>
<dbReference type="InterPro" id="IPR003728">
    <property type="entry name" value="Ribosome_maturation_RimP"/>
</dbReference>
<dbReference type="InterPro" id="IPR028998">
    <property type="entry name" value="RimP_C"/>
</dbReference>
<dbReference type="InterPro" id="IPR036847">
    <property type="entry name" value="RimP_C_sf"/>
</dbReference>
<dbReference type="InterPro" id="IPR028989">
    <property type="entry name" value="RimP_N"/>
</dbReference>
<dbReference type="InterPro" id="IPR035956">
    <property type="entry name" value="RimP_N_sf"/>
</dbReference>
<dbReference type="NCBIfam" id="NF000929">
    <property type="entry name" value="PRK00092.2-1"/>
    <property type="match status" value="1"/>
</dbReference>
<dbReference type="PANTHER" id="PTHR33867">
    <property type="entry name" value="RIBOSOME MATURATION FACTOR RIMP"/>
    <property type="match status" value="1"/>
</dbReference>
<dbReference type="PANTHER" id="PTHR33867:SF1">
    <property type="entry name" value="RIBOSOME MATURATION FACTOR RIMP"/>
    <property type="match status" value="1"/>
</dbReference>
<dbReference type="Pfam" id="PF17384">
    <property type="entry name" value="DUF150_C"/>
    <property type="match status" value="1"/>
</dbReference>
<dbReference type="Pfam" id="PF02576">
    <property type="entry name" value="RimP_N"/>
    <property type="match status" value="1"/>
</dbReference>
<dbReference type="SUPFAM" id="SSF74942">
    <property type="entry name" value="YhbC-like, C-terminal domain"/>
    <property type="match status" value="1"/>
</dbReference>
<dbReference type="SUPFAM" id="SSF75420">
    <property type="entry name" value="YhbC-like, N-terminal domain"/>
    <property type="match status" value="1"/>
</dbReference>
<name>RIMP_BORPA</name>
<accession>Q7W9A7</accession>
<feature type="chain" id="PRO_0000181851" description="Ribosome maturation factor RimP">
    <location>
        <begin position="1"/>
        <end position="168"/>
    </location>
</feature>
<comment type="function">
    <text evidence="1">Required for maturation of 30S ribosomal subunits.</text>
</comment>
<comment type="subcellular location">
    <subcellularLocation>
        <location evidence="1">Cytoplasm</location>
    </subcellularLocation>
</comment>
<comment type="similarity">
    <text evidence="1">Belongs to the RimP family.</text>
</comment>
<reference key="1">
    <citation type="journal article" date="2003" name="Nat. Genet.">
        <title>Comparative analysis of the genome sequences of Bordetella pertussis, Bordetella parapertussis and Bordetella bronchiseptica.</title>
        <authorList>
            <person name="Parkhill J."/>
            <person name="Sebaihia M."/>
            <person name="Preston A."/>
            <person name="Murphy L.D."/>
            <person name="Thomson N.R."/>
            <person name="Harris D.E."/>
            <person name="Holden M.T.G."/>
            <person name="Churcher C.M."/>
            <person name="Bentley S.D."/>
            <person name="Mungall K.L."/>
            <person name="Cerdeno-Tarraga A.-M."/>
            <person name="Temple L."/>
            <person name="James K.D."/>
            <person name="Harris B."/>
            <person name="Quail M.A."/>
            <person name="Achtman M."/>
            <person name="Atkin R."/>
            <person name="Baker S."/>
            <person name="Basham D."/>
            <person name="Bason N."/>
            <person name="Cherevach I."/>
            <person name="Chillingworth T."/>
            <person name="Collins M."/>
            <person name="Cronin A."/>
            <person name="Davis P."/>
            <person name="Doggett J."/>
            <person name="Feltwell T."/>
            <person name="Goble A."/>
            <person name="Hamlin N."/>
            <person name="Hauser H."/>
            <person name="Holroyd S."/>
            <person name="Jagels K."/>
            <person name="Leather S."/>
            <person name="Moule S."/>
            <person name="Norberczak H."/>
            <person name="O'Neil S."/>
            <person name="Ormond D."/>
            <person name="Price C."/>
            <person name="Rabbinowitsch E."/>
            <person name="Rutter S."/>
            <person name="Sanders M."/>
            <person name="Saunders D."/>
            <person name="Seeger K."/>
            <person name="Sharp S."/>
            <person name="Simmonds M."/>
            <person name="Skelton J."/>
            <person name="Squares R."/>
            <person name="Squares S."/>
            <person name="Stevens K."/>
            <person name="Unwin L."/>
            <person name="Whitehead S."/>
            <person name="Barrell B.G."/>
            <person name="Maskell D.J."/>
        </authorList>
    </citation>
    <scope>NUCLEOTIDE SEQUENCE [LARGE SCALE GENOMIC DNA]</scope>
    <source>
        <strain>12822 / ATCC BAA-587 / NCTC 13253</strain>
    </source>
</reference>
<organism>
    <name type="scientific">Bordetella parapertussis (strain 12822 / ATCC BAA-587 / NCTC 13253)</name>
    <dbReference type="NCBI Taxonomy" id="257311"/>
    <lineage>
        <taxon>Bacteria</taxon>
        <taxon>Pseudomonadati</taxon>
        <taxon>Pseudomonadota</taxon>
        <taxon>Betaproteobacteria</taxon>
        <taxon>Burkholderiales</taxon>
        <taxon>Alcaligenaceae</taxon>
        <taxon>Bordetella</taxon>
    </lineage>
</organism>
<evidence type="ECO:0000255" key="1">
    <source>
        <dbReference type="HAMAP-Rule" id="MF_01077"/>
    </source>
</evidence>